<protein>
    <recommendedName>
        <fullName evidence="2">DnaA regulatory inactivator Hda</fullName>
    </recommendedName>
</protein>
<comment type="function">
    <text evidence="1">Mediates the interaction of DNA replication initiator protein DnaA with DNA polymerase subunit beta sliding clamp (dnaN). Stimulates hydrolysis of ATP-DnaA to ADP-DnaA, rendering DnaA inactive for reinitiation, a process called regulatory inhibition of DnaA or RIDA (By similarity).</text>
</comment>
<comment type="subunit">
    <text evidence="2">The active form seems to be an ADP-bound monomer. Forms the RIDA complex (regulatory inactivation of DnaA) of ATP-DnaA, ADP-Hda and the DNA-loaded beta sliding clamp (dnaN).</text>
</comment>
<comment type="similarity">
    <text evidence="2">Belongs to the DnaA family. HdA subfamily.</text>
</comment>
<comment type="sequence caution" evidence="3">
    <conflict type="erroneous initiation">
        <sequence resource="EMBL-CDS" id="AAN44041"/>
    </conflict>
</comment>
<comment type="sequence caution" evidence="3">
    <conflict type="erroneous initiation">
        <sequence resource="EMBL-CDS" id="AAP17851"/>
    </conflict>
</comment>
<keyword id="KW-0235">DNA replication</keyword>
<keyword id="KW-0236">DNA replication inhibitor</keyword>
<keyword id="KW-1185">Reference proteome</keyword>
<accession>P69934</accession>
<accession>P76570</accession>
<accession>P76979</accession>
<evidence type="ECO:0000250" key="1"/>
<evidence type="ECO:0000255" key="2">
    <source>
        <dbReference type="HAMAP-Rule" id="MF_01158"/>
    </source>
</evidence>
<evidence type="ECO:0000305" key="3"/>
<proteinExistence type="inferred from homology"/>
<reference key="1">
    <citation type="journal article" date="2002" name="Nucleic Acids Res.">
        <title>Genome sequence of Shigella flexneri 2a: insights into pathogenicity through comparison with genomes of Escherichia coli K12 and O157.</title>
        <authorList>
            <person name="Jin Q."/>
            <person name="Yuan Z."/>
            <person name="Xu J."/>
            <person name="Wang Y."/>
            <person name="Shen Y."/>
            <person name="Lu W."/>
            <person name="Wang J."/>
            <person name="Liu H."/>
            <person name="Yang J."/>
            <person name="Yang F."/>
            <person name="Zhang X."/>
            <person name="Zhang J."/>
            <person name="Yang G."/>
            <person name="Wu H."/>
            <person name="Qu D."/>
            <person name="Dong J."/>
            <person name="Sun L."/>
            <person name="Xue Y."/>
            <person name="Zhao A."/>
            <person name="Gao Y."/>
            <person name="Zhu J."/>
            <person name="Kan B."/>
            <person name="Ding K."/>
            <person name="Chen S."/>
            <person name="Cheng H."/>
            <person name="Yao Z."/>
            <person name="He B."/>
            <person name="Chen R."/>
            <person name="Ma D."/>
            <person name="Qiang B."/>
            <person name="Wen Y."/>
            <person name="Hou Y."/>
            <person name="Yu J."/>
        </authorList>
    </citation>
    <scope>NUCLEOTIDE SEQUENCE [LARGE SCALE GENOMIC DNA]</scope>
    <source>
        <strain>301 / Serotype 2a</strain>
    </source>
</reference>
<reference key="2">
    <citation type="journal article" date="2003" name="Infect. Immun.">
        <title>Complete genome sequence and comparative genomics of Shigella flexneri serotype 2a strain 2457T.</title>
        <authorList>
            <person name="Wei J."/>
            <person name="Goldberg M.B."/>
            <person name="Burland V."/>
            <person name="Venkatesan M.M."/>
            <person name="Deng W."/>
            <person name="Fournier G."/>
            <person name="Mayhew G.F."/>
            <person name="Plunkett G. III"/>
            <person name="Rose D.J."/>
            <person name="Darling A."/>
            <person name="Mau B."/>
            <person name="Perna N.T."/>
            <person name="Payne S.M."/>
            <person name="Runyen-Janecky L.J."/>
            <person name="Zhou S."/>
            <person name="Schwartz D.C."/>
            <person name="Blattner F.R."/>
        </authorList>
    </citation>
    <scope>NUCLEOTIDE SEQUENCE [LARGE SCALE GENOMIC DNA]</scope>
    <source>
        <strain>ATCC 700930 / 2457T / Serotype 2a</strain>
    </source>
</reference>
<dbReference type="EMBL" id="AE005674">
    <property type="protein sequence ID" value="AAN44041.1"/>
    <property type="status" value="ALT_INIT"/>
    <property type="molecule type" value="Genomic_DNA"/>
</dbReference>
<dbReference type="EMBL" id="AE014073">
    <property type="protein sequence ID" value="AAP17851.1"/>
    <property type="status" value="ALT_INIT"/>
    <property type="molecule type" value="Genomic_DNA"/>
</dbReference>
<dbReference type="RefSeq" id="NP_708334.1">
    <property type="nucleotide sequence ID" value="NC_004337.2"/>
</dbReference>
<dbReference type="RefSeq" id="WP_001307333.1">
    <property type="nucleotide sequence ID" value="NZ_WPGW01000011.1"/>
</dbReference>
<dbReference type="SMR" id="P69934"/>
<dbReference type="STRING" id="198214.SF2540"/>
<dbReference type="PaxDb" id="198214-SF2540"/>
<dbReference type="GeneID" id="1025084"/>
<dbReference type="KEGG" id="sfl:SF2540"/>
<dbReference type="KEGG" id="sfx:S2689"/>
<dbReference type="PATRIC" id="fig|198214.7.peg.3036"/>
<dbReference type="HOGENOM" id="CLU_072265_1_1_6"/>
<dbReference type="Proteomes" id="UP000001006">
    <property type="component" value="Chromosome"/>
</dbReference>
<dbReference type="Proteomes" id="UP000002673">
    <property type="component" value="Chromosome"/>
</dbReference>
<dbReference type="GO" id="GO:0006270">
    <property type="term" value="P:DNA replication initiation"/>
    <property type="evidence" value="ECO:0007669"/>
    <property type="project" value="TreeGrafter"/>
</dbReference>
<dbReference type="GO" id="GO:0032297">
    <property type="term" value="P:negative regulation of DNA-templated DNA replication initiation"/>
    <property type="evidence" value="ECO:0007669"/>
    <property type="project" value="InterPro"/>
</dbReference>
<dbReference type="FunFam" id="1.10.8.60:FF:000024">
    <property type="entry name" value="DnaA regulatory inactivator Hda"/>
    <property type="match status" value="1"/>
</dbReference>
<dbReference type="FunFam" id="3.40.50.300:FF:000452">
    <property type="entry name" value="DnaA regulatory inactivator Hda"/>
    <property type="match status" value="1"/>
</dbReference>
<dbReference type="Gene3D" id="1.10.8.60">
    <property type="match status" value="1"/>
</dbReference>
<dbReference type="Gene3D" id="3.40.50.300">
    <property type="entry name" value="P-loop containing nucleotide triphosphate hydrolases"/>
    <property type="match status" value="1"/>
</dbReference>
<dbReference type="HAMAP" id="MF_01158">
    <property type="entry name" value="Hda"/>
    <property type="match status" value="1"/>
</dbReference>
<dbReference type="InterPro" id="IPR020591">
    <property type="entry name" value="Chromosome_initiator_DnaA-like"/>
</dbReference>
<dbReference type="InterPro" id="IPR013317">
    <property type="entry name" value="DnaA_dom"/>
</dbReference>
<dbReference type="InterPro" id="IPR017788">
    <property type="entry name" value="Hda"/>
</dbReference>
<dbReference type="InterPro" id="IPR022864">
    <property type="entry name" value="Hda_Enterobact"/>
</dbReference>
<dbReference type="InterPro" id="IPR055199">
    <property type="entry name" value="Hda_lid"/>
</dbReference>
<dbReference type="InterPro" id="IPR027417">
    <property type="entry name" value="P-loop_NTPase"/>
</dbReference>
<dbReference type="NCBIfam" id="TIGR03420">
    <property type="entry name" value="DnaA_homol_Hda"/>
    <property type="match status" value="1"/>
</dbReference>
<dbReference type="NCBIfam" id="NF005982">
    <property type="entry name" value="PRK08084.1"/>
    <property type="match status" value="1"/>
</dbReference>
<dbReference type="PANTHER" id="PTHR30050">
    <property type="entry name" value="CHROMOSOMAL REPLICATION INITIATOR PROTEIN DNAA"/>
    <property type="match status" value="1"/>
</dbReference>
<dbReference type="PANTHER" id="PTHR30050:SF5">
    <property type="entry name" value="DNAA REGULATORY INACTIVATOR HDA"/>
    <property type="match status" value="1"/>
</dbReference>
<dbReference type="Pfam" id="PF00308">
    <property type="entry name" value="Bac_DnaA"/>
    <property type="match status" value="1"/>
</dbReference>
<dbReference type="Pfam" id="PF22688">
    <property type="entry name" value="Hda_lid"/>
    <property type="match status" value="1"/>
</dbReference>
<dbReference type="PRINTS" id="PR00051">
    <property type="entry name" value="DNAA"/>
</dbReference>
<dbReference type="SUPFAM" id="SSF52540">
    <property type="entry name" value="P-loop containing nucleoside triphosphate hydrolases"/>
    <property type="match status" value="1"/>
</dbReference>
<gene>
    <name evidence="2" type="primary">hda</name>
    <name type="ordered locus">SF2540</name>
    <name type="ordered locus">S2689</name>
</gene>
<feature type="chain" id="PRO_0000114321" description="DnaA regulatory inactivator Hda">
    <location>
        <begin position="1"/>
        <end position="233"/>
    </location>
</feature>
<name>HDA_SHIFL</name>
<organism>
    <name type="scientific">Shigella flexneri</name>
    <dbReference type="NCBI Taxonomy" id="623"/>
    <lineage>
        <taxon>Bacteria</taxon>
        <taxon>Pseudomonadati</taxon>
        <taxon>Pseudomonadota</taxon>
        <taxon>Gammaproteobacteria</taxon>
        <taxon>Enterobacterales</taxon>
        <taxon>Enterobacteriaceae</taxon>
        <taxon>Shigella</taxon>
    </lineage>
</organism>
<sequence>MNTPAQLSLPLYLPDDETFASFWPGDNSSLLAALQNVLRQEHSGYIYLWAREGAGRSHLLHAACAELSQRGDAVGYVPLDKRTWFVPEVLDGMEHLSLVCIDNIECIAGDELWEMAIFDLYNRILESGKTRLLITGDRPPRQLNLGLPDLASRLDWGQIYKLQPLSDEDKLQALQLRARLRGFELPEDVGRFLLKRLDREMRTLFMTLDQLDRASITAQRKLTIPFVKEILKL</sequence>